<feature type="chain" id="PRO_0000351975" description="Small ribosomal subunit protein uS2">
    <location>
        <begin position="1"/>
        <end position="314"/>
    </location>
</feature>
<feature type="region of interest" description="Disordered" evidence="2">
    <location>
        <begin position="244"/>
        <end position="314"/>
    </location>
</feature>
<feature type="compositionally biased region" description="Basic and acidic residues" evidence="2">
    <location>
        <begin position="244"/>
        <end position="265"/>
    </location>
</feature>
<feature type="compositionally biased region" description="Basic and acidic residues" evidence="2">
    <location>
        <begin position="271"/>
        <end position="287"/>
    </location>
</feature>
<feature type="compositionally biased region" description="Low complexity" evidence="2">
    <location>
        <begin position="302"/>
        <end position="314"/>
    </location>
</feature>
<reference key="1">
    <citation type="submission" date="2006-01" db="EMBL/GenBank/DDBJ databases">
        <title>Complete sequence of Anaeromyxobacter dehalogenans 2CP-C.</title>
        <authorList>
            <person name="Copeland A."/>
            <person name="Lucas S."/>
            <person name="Lapidus A."/>
            <person name="Barry K."/>
            <person name="Detter J.C."/>
            <person name="Glavina T."/>
            <person name="Hammon N."/>
            <person name="Israni S."/>
            <person name="Pitluck S."/>
            <person name="Brettin T."/>
            <person name="Bruce D."/>
            <person name="Han C."/>
            <person name="Tapia R."/>
            <person name="Gilna P."/>
            <person name="Kiss H."/>
            <person name="Schmutz J."/>
            <person name="Larimer F."/>
            <person name="Land M."/>
            <person name="Kyrpides N."/>
            <person name="Anderson I."/>
            <person name="Sanford R.A."/>
            <person name="Ritalahti K.M."/>
            <person name="Thomas H.S."/>
            <person name="Kirby J.R."/>
            <person name="Zhulin I.B."/>
            <person name="Loeffler F.E."/>
            <person name="Richardson P."/>
        </authorList>
    </citation>
    <scope>NUCLEOTIDE SEQUENCE [LARGE SCALE GENOMIC DNA]</scope>
    <source>
        <strain>2CP-C</strain>
    </source>
</reference>
<evidence type="ECO:0000255" key="1">
    <source>
        <dbReference type="HAMAP-Rule" id="MF_00291"/>
    </source>
</evidence>
<evidence type="ECO:0000256" key="2">
    <source>
        <dbReference type="SAM" id="MobiDB-lite"/>
    </source>
</evidence>
<evidence type="ECO:0000305" key="3"/>
<comment type="similarity">
    <text evidence="1">Belongs to the universal ribosomal protein uS2 family.</text>
</comment>
<comment type="sequence caution" evidence="3">
    <conflict type="erroneous initiation">
        <sequence resource="EMBL-CDS" id="ABC80049"/>
    </conflict>
</comment>
<dbReference type="EMBL" id="CP000251">
    <property type="protein sequence ID" value="ABC80049.1"/>
    <property type="status" value="ALT_INIT"/>
    <property type="molecule type" value="Genomic_DNA"/>
</dbReference>
<dbReference type="RefSeq" id="WP_012524361.1">
    <property type="nucleotide sequence ID" value="NC_007760.1"/>
</dbReference>
<dbReference type="SMR" id="Q2IML9"/>
<dbReference type="STRING" id="290397.Adeh_0273"/>
<dbReference type="KEGG" id="ade:Adeh_0273"/>
<dbReference type="eggNOG" id="COG0052">
    <property type="taxonomic scope" value="Bacteria"/>
</dbReference>
<dbReference type="HOGENOM" id="CLU_040318_0_2_7"/>
<dbReference type="OrthoDB" id="9808036at2"/>
<dbReference type="Proteomes" id="UP000001935">
    <property type="component" value="Chromosome"/>
</dbReference>
<dbReference type="GO" id="GO:0022627">
    <property type="term" value="C:cytosolic small ribosomal subunit"/>
    <property type="evidence" value="ECO:0007669"/>
    <property type="project" value="TreeGrafter"/>
</dbReference>
<dbReference type="GO" id="GO:0003735">
    <property type="term" value="F:structural constituent of ribosome"/>
    <property type="evidence" value="ECO:0007669"/>
    <property type="project" value="InterPro"/>
</dbReference>
<dbReference type="GO" id="GO:0006412">
    <property type="term" value="P:translation"/>
    <property type="evidence" value="ECO:0007669"/>
    <property type="project" value="UniProtKB-UniRule"/>
</dbReference>
<dbReference type="CDD" id="cd01425">
    <property type="entry name" value="RPS2"/>
    <property type="match status" value="1"/>
</dbReference>
<dbReference type="FunFam" id="1.10.287.610:FF:000001">
    <property type="entry name" value="30S ribosomal protein S2"/>
    <property type="match status" value="1"/>
</dbReference>
<dbReference type="Gene3D" id="3.40.50.10490">
    <property type="entry name" value="Glucose-6-phosphate isomerase like protein, domain 1"/>
    <property type="match status" value="1"/>
</dbReference>
<dbReference type="Gene3D" id="1.10.287.610">
    <property type="entry name" value="Helix hairpin bin"/>
    <property type="match status" value="1"/>
</dbReference>
<dbReference type="HAMAP" id="MF_00291_B">
    <property type="entry name" value="Ribosomal_uS2_B"/>
    <property type="match status" value="1"/>
</dbReference>
<dbReference type="InterPro" id="IPR001865">
    <property type="entry name" value="Ribosomal_uS2"/>
</dbReference>
<dbReference type="InterPro" id="IPR005706">
    <property type="entry name" value="Ribosomal_uS2_bac/mit/plastid"/>
</dbReference>
<dbReference type="InterPro" id="IPR018130">
    <property type="entry name" value="Ribosomal_uS2_CS"/>
</dbReference>
<dbReference type="InterPro" id="IPR023591">
    <property type="entry name" value="Ribosomal_uS2_flav_dom_sf"/>
</dbReference>
<dbReference type="NCBIfam" id="TIGR01011">
    <property type="entry name" value="rpsB_bact"/>
    <property type="match status" value="1"/>
</dbReference>
<dbReference type="PANTHER" id="PTHR12534">
    <property type="entry name" value="30S RIBOSOMAL PROTEIN S2 PROKARYOTIC AND ORGANELLAR"/>
    <property type="match status" value="1"/>
</dbReference>
<dbReference type="PANTHER" id="PTHR12534:SF0">
    <property type="entry name" value="SMALL RIBOSOMAL SUBUNIT PROTEIN US2M"/>
    <property type="match status" value="1"/>
</dbReference>
<dbReference type="Pfam" id="PF00318">
    <property type="entry name" value="Ribosomal_S2"/>
    <property type="match status" value="1"/>
</dbReference>
<dbReference type="PRINTS" id="PR00395">
    <property type="entry name" value="RIBOSOMALS2"/>
</dbReference>
<dbReference type="SUPFAM" id="SSF52313">
    <property type="entry name" value="Ribosomal protein S2"/>
    <property type="match status" value="1"/>
</dbReference>
<dbReference type="PROSITE" id="PS00962">
    <property type="entry name" value="RIBOSOMAL_S2_1"/>
    <property type="match status" value="1"/>
</dbReference>
<dbReference type="PROSITE" id="PS00963">
    <property type="entry name" value="RIBOSOMAL_S2_2"/>
    <property type="match status" value="1"/>
</dbReference>
<proteinExistence type="inferred from homology"/>
<gene>
    <name evidence="1" type="primary">rpsB</name>
    <name type="ordered locus">Adeh_0273</name>
</gene>
<protein>
    <recommendedName>
        <fullName evidence="1">Small ribosomal subunit protein uS2</fullName>
    </recommendedName>
    <alternativeName>
        <fullName evidence="3">30S ribosomal protein S2</fullName>
    </alternativeName>
</protein>
<organism>
    <name type="scientific">Anaeromyxobacter dehalogenans (strain 2CP-C)</name>
    <dbReference type="NCBI Taxonomy" id="290397"/>
    <lineage>
        <taxon>Bacteria</taxon>
        <taxon>Pseudomonadati</taxon>
        <taxon>Myxococcota</taxon>
        <taxon>Myxococcia</taxon>
        <taxon>Myxococcales</taxon>
        <taxon>Cystobacterineae</taxon>
        <taxon>Anaeromyxobacteraceae</taxon>
        <taxon>Anaeromyxobacter</taxon>
    </lineage>
</organism>
<sequence>MAAALSQGGTAITMKALLEAGVHFGHQTKRWNPKMKPFIFGARNGIYIIDLQKTVGLARNALRFVSDSVAKGGSVLFVGTKKQAQDAIREEASRSGQFFVTNRWLGGTLTNFKTVKQGIDRLKTIEKMAADGTYERLPKKEVAQLEREREKLEKNLGGIKELSRLPSALFVIDTKKEHIAVHEANRLGIPVVAVVDTNCDPEGIDYVIPGNDDAIRSIRLFTGKVAEACIEGKGRYSAWVAEHGGHDERREQEDRDAASERGHKDRRDRRDRRGGPRERREPREDRAAASANVEVVRKGEVAPAAAPEAAPAKE</sequence>
<keyword id="KW-1185">Reference proteome</keyword>
<keyword id="KW-0687">Ribonucleoprotein</keyword>
<keyword id="KW-0689">Ribosomal protein</keyword>
<name>RS2_ANADE</name>
<accession>Q2IML9</accession>